<protein>
    <recommendedName>
        <fullName>Serine/threonine-protein kinase ppk31</fullName>
        <ecNumber>2.7.11.1</ecNumber>
    </recommendedName>
    <alternativeName>
        <fullName>Meiotically up-regulated gene 25 protein</fullName>
    </alternativeName>
</protein>
<accession>O94324</accession>
<gene>
    <name type="primary">ppk31</name>
    <name type="synonym">mug25</name>
    <name type="ORF">SPBC725.06c</name>
</gene>
<feature type="chain" id="PRO_0000256828" description="Serine/threonine-protein kinase ppk31">
    <location>
        <begin position="1"/>
        <end position="1032"/>
    </location>
</feature>
<feature type="domain" description="PAS">
    <location>
        <begin position="3"/>
        <end position="72"/>
    </location>
</feature>
<feature type="domain" description="Protein kinase" evidence="1">
    <location>
        <begin position="528"/>
        <end position="877"/>
    </location>
</feature>
<feature type="region of interest" description="Disordered" evidence="3">
    <location>
        <begin position="938"/>
        <end position="963"/>
    </location>
</feature>
<feature type="compositionally biased region" description="Low complexity" evidence="3">
    <location>
        <begin position="947"/>
        <end position="957"/>
    </location>
</feature>
<feature type="active site" description="Proton acceptor" evidence="1 2">
    <location>
        <position position="652"/>
    </location>
</feature>
<feature type="binding site" evidence="1">
    <location>
        <begin position="534"/>
        <end position="542"/>
    </location>
    <ligand>
        <name>ATP</name>
        <dbReference type="ChEBI" id="CHEBI:30616"/>
    </ligand>
</feature>
<feature type="binding site" evidence="1">
    <location>
        <position position="557"/>
    </location>
    <ligand>
        <name>ATP</name>
        <dbReference type="ChEBI" id="CHEBI:30616"/>
    </ligand>
</feature>
<keyword id="KW-0067">ATP-binding</keyword>
<keyword id="KW-0963">Cytoplasm</keyword>
<keyword id="KW-0418">Kinase</keyword>
<keyword id="KW-0469">Meiosis</keyword>
<keyword id="KW-0547">Nucleotide-binding</keyword>
<keyword id="KW-1185">Reference proteome</keyword>
<keyword id="KW-0723">Serine/threonine-protein kinase</keyword>
<keyword id="KW-0808">Transferase</keyword>
<dbReference type="EC" id="2.7.11.1"/>
<dbReference type="EMBL" id="CU329671">
    <property type="protein sequence ID" value="CAA22178.1"/>
    <property type="molecule type" value="Genomic_DNA"/>
</dbReference>
<dbReference type="PIR" id="T40658">
    <property type="entry name" value="T40658"/>
</dbReference>
<dbReference type="RefSeq" id="NP_595486.1">
    <property type="nucleotide sequence ID" value="NM_001021397.2"/>
</dbReference>
<dbReference type="SMR" id="O94324"/>
<dbReference type="BioGRID" id="277610">
    <property type="interactions" value="24"/>
</dbReference>
<dbReference type="FunCoup" id="O94324">
    <property type="interactions" value="199"/>
</dbReference>
<dbReference type="STRING" id="284812.O94324"/>
<dbReference type="iPTMnet" id="O94324"/>
<dbReference type="PaxDb" id="4896-SPBC725.06c.1"/>
<dbReference type="EnsemblFungi" id="SPBC725.06c.1">
    <property type="protein sequence ID" value="SPBC725.06c.1:pep"/>
    <property type="gene ID" value="SPBC725.06c"/>
</dbReference>
<dbReference type="GeneID" id="2541095"/>
<dbReference type="KEGG" id="spo:2541095"/>
<dbReference type="PomBase" id="SPBC725.06c">
    <property type="gene designation" value="ppk31"/>
</dbReference>
<dbReference type="VEuPathDB" id="FungiDB:SPBC725.06c"/>
<dbReference type="eggNOG" id="KOG0605">
    <property type="taxonomic scope" value="Eukaryota"/>
</dbReference>
<dbReference type="HOGENOM" id="CLU_306328_0_0_1"/>
<dbReference type="InParanoid" id="O94324"/>
<dbReference type="OMA" id="ESEGFFC"/>
<dbReference type="PhylomeDB" id="O94324"/>
<dbReference type="PRO" id="PR:O94324"/>
<dbReference type="Proteomes" id="UP000002485">
    <property type="component" value="Chromosome II"/>
</dbReference>
<dbReference type="GO" id="GO:0005737">
    <property type="term" value="C:cytoplasm"/>
    <property type="evidence" value="ECO:0000318"/>
    <property type="project" value="GO_Central"/>
</dbReference>
<dbReference type="GO" id="GO:0005829">
    <property type="term" value="C:cytosol"/>
    <property type="evidence" value="ECO:0007005"/>
    <property type="project" value="PomBase"/>
</dbReference>
<dbReference type="GO" id="GO:0005634">
    <property type="term" value="C:nucleus"/>
    <property type="evidence" value="ECO:0000318"/>
    <property type="project" value="GO_Central"/>
</dbReference>
<dbReference type="GO" id="GO:0005524">
    <property type="term" value="F:ATP binding"/>
    <property type="evidence" value="ECO:0007669"/>
    <property type="project" value="UniProtKB-KW"/>
</dbReference>
<dbReference type="GO" id="GO:0106310">
    <property type="term" value="F:protein serine kinase activity"/>
    <property type="evidence" value="ECO:0007669"/>
    <property type="project" value="RHEA"/>
</dbReference>
<dbReference type="GO" id="GO:0004674">
    <property type="term" value="F:protein serine/threonine kinase activity"/>
    <property type="evidence" value="ECO:0000318"/>
    <property type="project" value="GO_Central"/>
</dbReference>
<dbReference type="GO" id="GO:0035556">
    <property type="term" value="P:intracellular signal transduction"/>
    <property type="evidence" value="ECO:0000318"/>
    <property type="project" value="GO_Central"/>
</dbReference>
<dbReference type="GO" id="GO:0051321">
    <property type="term" value="P:meiotic cell cycle"/>
    <property type="evidence" value="ECO:0007669"/>
    <property type="project" value="UniProtKB-KW"/>
</dbReference>
<dbReference type="GO" id="GO:0010508">
    <property type="term" value="P:positive regulation of autophagy"/>
    <property type="evidence" value="ECO:0000266"/>
    <property type="project" value="PomBase"/>
</dbReference>
<dbReference type="CDD" id="cd00130">
    <property type="entry name" value="PAS"/>
    <property type="match status" value="1"/>
</dbReference>
<dbReference type="CDD" id="cd05611">
    <property type="entry name" value="STKc_Rim15_like"/>
    <property type="match status" value="1"/>
</dbReference>
<dbReference type="FunFam" id="1.10.510.10:FF:000294">
    <property type="entry name" value="Serine/threonine-protein kinase OXI1"/>
    <property type="match status" value="1"/>
</dbReference>
<dbReference type="Gene3D" id="3.30.200.20">
    <property type="entry name" value="Phosphorylase Kinase, domain 1"/>
    <property type="match status" value="2"/>
</dbReference>
<dbReference type="Gene3D" id="1.10.510.10">
    <property type="entry name" value="Transferase(Phosphotransferase) domain 1"/>
    <property type="match status" value="2"/>
</dbReference>
<dbReference type="InterPro" id="IPR011009">
    <property type="entry name" value="Kinase-like_dom_sf"/>
</dbReference>
<dbReference type="InterPro" id="IPR000014">
    <property type="entry name" value="PAS"/>
</dbReference>
<dbReference type="InterPro" id="IPR000719">
    <property type="entry name" value="Prot_kinase_dom"/>
</dbReference>
<dbReference type="InterPro" id="IPR008271">
    <property type="entry name" value="Ser/Thr_kinase_AS"/>
</dbReference>
<dbReference type="InterPro" id="IPR050236">
    <property type="entry name" value="Ser_Thr_kinase_AGC"/>
</dbReference>
<dbReference type="PANTHER" id="PTHR24356">
    <property type="entry name" value="SERINE/THREONINE-PROTEIN KINASE"/>
    <property type="match status" value="1"/>
</dbReference>
<dbReference type="PANTHER" id="PTHR24356:SF413">
    <property type="entry name" value="SERINE_THREONINE-PROTEIN KINASE CEK1-RELATED"/>
    <property type="match status" value="1"/>
</dbReference>
<dbReference type="Pfam" id="PF00069">
    <property type="entry name" value="Pkinase"/>
    <property type="match status" value="2"/>
</dbReference>
<dbReference type="SMART" id="SM00220">
    <property type="entry name" value="S_TKc"/>
    <property type="match status" value="1"/>
</dbReference>
<dbReference type="SUPFAM" id="SSF56112">
    <property type="entry name" value="Protein kinase-like (PK-like)"/>
    <property type="match status" value="1"/>
</dbReference>
<dbReference type="PROSITE" id="PS50011">
    <property type="entry name" value="PROTEIN_KINASE_DOM"/>
    <property type="match status" value="1"/>
</dbReference>
<dbReference type="PROSITE" id="PS00108">
    <property type="entry name" value="PROTEIN_KINASE_ST"/>
    <property type="match status" value="1"/>
</dbReference>
<name>PPK31_SCHPO</name>
<evidence type="ECO:0000255" key="1">
    <source>
        <dbReference type="PROSITE-ProRule" id="PRU00159"/>
    </source>
</evidence>
<evidence type="ECO:0000255" key="2">
    <source>
        <dbReference type="PROSITE-ProRule" id="PRU10027"/>
    </source>
</evidence>
<evidence type="ECO:0000256" key="3">
    <source>
        <dbReference type="SAM" id="MobiDB-lite"/>
    </source>
</evidence>
<evidence type="ECO:0000269" key="4">
    <source>
    </source>
</evidence>
<evidence type="ECO:0000269" key="5">
    <source>
    </source>
</evidence>
<comment type="function">
    <text evidence="4">Has a role in meiosis.</text>
</comment>
<comment type="catalytic activity">
    <reaction>
        <text>L-seryl-[protein] + ATP = O-phospho-L-seryl-[protein] + ADP + H(+)</text>
        <dbReference type="Rhea" id="RHEA:17989"/>
        <dbReference type="Rhea" id="RHEA-COMP:9863"/>
        <dbReference type="Rhea" id="RHEA-COMP:11604"/>
        <dbReference type="ChEBI" id="CHEBI:15378"/>
        <dbReference type="ChEBI" id="CHEBI:29999"/>
        <dbReference type="ChEBI" id="CHEBI:30616"/>
        <dbReference type="ChEBI" id="CHEBI:83421"/>
        <dbReference type="ChEBI" id="CHEBI:456216"/>
        <dbReference type="EC" id="2.7.11.1"/>
    </reaction>
</comment>
<comment type="catalytic activity">
    <reaction>
        <text>L-threonyl-[protein] + ATP = O-phospho-L-threonyl-[protein] + ADP + H(+)</text>
        <dbReference type="Rhea" id="RHEA:46608"/>
        <dbReference type="Rhea" id="RHEA-COMP:11060"/>
        <dbReference type="Rhea" id="RHEA-COMP:11605"/>
        <dbReference type="ChEBI" id="CHEBI:15378"/>
        <dbReference type="ChEBI" id="CHEBI:30013"/>
        <dbReference type="ChEBI" id="CHEBI:30616"/>
        <dbReference type="ChEBI" id="CHEBI:61977"/>
        <dbReference type="ChEBI" id="CHEBI:456216"/>
        <dbReference type="EC" id="2.7.11.1"/>
    </reaction>
</comment>
<comment type="subcellular location">
    <subcellularLocation>
        <location evidence="5">Cytoplasm</location>
    </subcellularLocation>
</comment>
<comment type="similarity">
    <text evidence="1">Belongs to the protein kinase superfamily. Ser/Thr protein kinase family.</text>
</comment>
<proteinExistence type="evidence at protein level"/>
<organism>
    <name type="scientific">Schizosaccharomyces pombe (strain 972 / ATCC 24843)</name>
    <name type="common">Fission yeast</name>
    <dbReference type="NCBI Taxonomy" id="284812"/>
    <lineage>
        <taxon>Eukaryota</taxon>
        <taxon>Fungi</taxon>
        <taxon>Dikarya</taxon>
        <taxon>Ascomycota</taxon>
        <taxon>Taphrinomycotina</taxon>
        <taxon>Schizosaccharomycetes</taxon>
        <taxon>Schizosaccharomycetales</taxon>
        <taxon>Schizosaccharomycetaceae</taxon>
        <taxon>Schizosaccharomyces</taxon>
    </lineage>
</organism>
<reference key="1">
    <citation type="journal article" date="2002" name="Nature">
        <title>The genome sequence of Schizosaccharomyces pombe.</title>
        <authorList>
            <person name="Wood V."/>
            <person name="Gwilliam R."/>
            <person name="Rajandream M.A."/>
            <person name="Lyne M.H."/>
            <person name="Lyne R."/>
            <person name="Stewart A."/>
            <person name="Sgouros J.G."/>
            <person name="Peat N."/>
            <person name="Hayles J."/>
            <person name="Baker S.G."/>
            <person name="Basham D."/>
            <person name="Bowman S."/>
            <person name="Brooks K."/>
            <person name="Brown D."/>
            <person name="Brown S."/>
            <person name="Chillingworth T."/>
            <person name="Churcher C.M."/>
            <person name="Collins M."/>
            <person name="Connor R."/>
            <person name="Cronin A."/>
            <person name="Davis P."/>
            <person name="Feltwell T."/>
            <person name="Fraser A."/>
            <person name="Gentles S."/>
            <person name="Goble A."/>
            <person name="Hamlin N."/>
            <person name="Harris D.E."/>
            <person name="Hidalgo J."/>
            <person name="Hodgson G."/>
            <person name="Holroyd S."/>
            <person name="Hornsby T."/>
            <person name="Howarth S."/>
            <person name="Huckle E.J."/>
            <person name="Hunt S."/>
            <person name="Jagels K."/>
            <person name="James K.D."/>
            <person name="Jones L."/>
            <person name="Jones M."/>
            <person name="Leather S."/>
            <person name="McDonald S."/>
            <person name="McLean J."/>
            <person name="Mooney P."/>
            <person name="Moule S."/>
            <person name="Mungall K.L."/>
            <person name="Murphy L.D."/>
            <person name="Niblett D."/>
            <person name="Odell C."/>
            <person name="Oliver K."/>
            <person name="O'Neil S."/>
            <person name="Pearson D."/>
            <person name="Quail M.A."/>
            <person name="Rabbinowitsch E."/>
            <person name="Rutherford K.M."/>
            <person name="Rutter S."/>
            <person name="Saunders D."/>
            <person name="Seeger K."/>
            <person name="Sharp S."/>
            <person name="Skelton J."/>
            <person name="Simmonds M.N."/>
            <person name="Squares R."/>
            <person name="Squares S."/>
            <person name="Stevens K."/>
            <person name="Taylor K."/>
            <person name="Taylor R.G."/>
            <person name="Tivey A."/>
            <person name="Walsh S.V."/>
            <person name="Warren T."/>
            <person name="Whitehead S."/>
            <person name="Woodward J.R."/>
            <person name="Volckaert G."/>
            <person name="Aert R."/>
            <person name="Robben J."/>
            <person name="Grymonprez B."/>
            <person name="Weltjens I."/>
            <person name="Vanstreels E."/>
            <person name="Rieger M."/>
            <person name="Schaefer M."/>
            <person name="Mueller-Auer S."/>
            <person name="Gabel C."/>
            <person name="Fuchs M."/>
            <person name="Duesterhoeft A."/>
            <person name="Fritzc C."/>
            <person name="Holzer E."/>
            <person name="Moestl D."/>
            <person name="Hilbert H."/>
            <person name="Borzym K."/>
            <person name="Langer I."/>
            <person name="Beck A."/>
            <person name="Lehrach H."/>
            <person name="Reinhardt R."/>
            <person name="Pohl T.M."/>
            <person name="Eger P."/>
            <person name="Zimmermann W."/>
            <person name="Wedler H."/>
            <person name="Wambutt R."/>
            <person name="Purnelle B."/>
            <person name="Goffeau A."/>
            <person name="Cadieu E."/>
            <person name="Dreano S."/>
            <person name="Gloux S."/>
            <person name="Lelaure V."/>
            <person name="Mottier S."/>
            <person name="Galibert F."/>
            <person name="Aves S.J."/>
            <person name="Xiang Z."/>
            <person name="Hunt C."/>
            <person name="Moore K."/>
            <person name="Hurst S.M."/>
            <person name="Lucas M."/>
            <person name="Rochet M."/>
            <person name="Gaillardin C."/>
            <person name="Tallada V.A."/>
            <person name="Garzon A."/>
            <person name="Thode G."/>
            <person name="Daga R.R."/>
            <person name="Cruzado L."/>
            <person name="Jimenez J."/>
            <person name="Sanchez M."/>
            <person name="del Rey F."/>
            <person name="Benito J."/>
            <person name="Dominguez A."/>
            <person name="Revuelta J.L."/>
            <person name="Moreno S."/>
            <person name="Armstrong J."/>
            <person name="Forsburg S.L."/>
            <person name="Cerutti L."/>
            <person name="Lowe T."/>
            <person name="McCombie W.R."/>
            <person name="Paulsen I."/>
            <person name="Potashkin J."/>
            <person name="Shpakovski G.V."/>
            <person name="Ussery D."/>
            <person name="Barrell B.G."/>
            <person name="Nurse P."/>
        </authorList>
    </citation>
    <scope>NUCLEOTIDE SEQUENCE [LARGE SCALE GENOMIC DNA]</scope>
    <source>
        <strain>972 / ATCC 24843</strain>
    </source>
</reference>
<reference key="2">
    <citation type="journal article" date="2005" name="Curr. Biol.">
        <title>A large-scale screen in S. pombe identifies seven novel genes required for critical meiotic events.</title>
        <authorList>
            <person name="Martin-Castellanos C."/>
            <person name="Blanco M."/>
            <person name="Rozalen A.E."/>
            <person name="Perez-Hidalgo L."/>
            <person name="Garcia A.I."/>
            <person name="Conde F."/>
            <person name="Mata J."/>
            <person name="Ellermeier C."/>
            <person name="Davis L."/>
            <person name="San-Segundo P."/>
            <person name="Smith G.R."/>
            <person name="Moreno S."/>
        </authorList>
    </citation>
    <scope>FUNCTION IN MEIOSIS</scope>
</reference>
<reference key="3">
    <citation type="journal article" date="2005" name="Eukaryot. Cell">
        <title>Systematic deletion analysis of fission yeast protein kinases.</title>
        <authorList>
            <person name="Bimbo A."/>
            <person name="Jia Y."/>
            <person name="Poh S.L."/>
            <person name="Karuturi R.K.M."/>
            <person name="den Elzen N."/>
            <person name="Peng X."/>
            <person name="Zheng L."/>
            <person name="O'Connell M."/>
            <person name="Liu E.T."/>
            <person name="Balasubramanian M.K."/>
            <person name="Liu J."/>
        </authorList>
    </citation>
    <scope>IDENTIFICATION</scope>
</reference>
<reference key="4">
    <citation type="journal article" date="2006" name="Nat. Biotechnol.">
        <title>ORFeome cloning and global analysis of protein localization in the fission yeast Schizosaccharomyces pombe.</title>
        <authorList>
            <person name="Matsuyama A."/>
            <person name="Arai R."/>
            <person name="Yashiroda Y."/>
            <person name="Shirai A."/>
            <person name="Kamata A."/>
            <person name="Sekido S."/>
            <person name="Kobayashi Y."/>
            <person name="Hashimoto A."/>
            <person name="Hamamoto M."/>
            <person name="Hiraoka Y."/>
            <person name="Horinouchi S."/>
            <person name="Yoshida M."/>
        </authorList>
    </citation>
    <scope>SUBCELLULAR LOCATION [LARGE SCALE ANALYSIS]</scope>
</reference>
<sequence length="1032" mass="120269">MTNPEQLKRILSHEVLLKIEMSKNGIVEYANPAFFELIGYEGDLFQCSFYEYLQSDDEHLMKKATDNLFRKSISVAHVFAFLRCNPIRSPNYYIQQAKAPFEGKTYIRMLFRGILVDSLYGKDTRVLWAGKYLYPQRSVINEMDFILFNTLGIGAFILHDHLLGIIKYNYIHVPPPSGKLCSLCEDNLPEWYFEVHSDFCLVWNDLVRRVFAVQQLINCKKLEIEDIVNKLPTGSNHMVEETFLSLPVITVFNGKKNRKQRFRIRSWRSSLNFLVKELDKSIKNFAYLEHRTFLTISNSAAKDMKREIYEKSLVNWEYDFLVPSKIQDYFYDVHSLLLKNLSSKIKLCNHILMYQATFNEVKNFLQTYSLNMLSIEMENIEGSLYFGNAQLSNLICVNQYLSEQRPVFFNRLLALGNVENNNSIYDDIQKRTERISTIKRHKKYFEIGERLTEKDLIVSKTFKTTRIDYFKAVKGSIEDLDVRPLKNRQKFVNKFYASIVHFLTESMQFPSHNDRRFGDNTPHSLDEFILLKEINRGAYGRVYLAKKRSSGKYFALKMIPKSSLDSLKKIKGLLLEKRNMHIQRYGPNTVKLYYAFDSGDYLCLVMDYFNGGDCETLIQKLGPLPEQWVCQYAAELLNAIELLHQDGIIHHDIKPANMLVDETGHIRLTDFGLSENVEEKKEVYKLTKRMSFEQKHGNLYEQLQPKKFEFVRYVRNYRGNIDELEKAESPQQNSDYANDSVQHLLDFDINNMDETAIHMLMNQLEKKENRTFIKKDISGTPNYMAPEILMGVDTQMGDIWAMGCVIFEMLTGTRPFEANTVKAIWARIERNDIGWTKRVKESCSKEAVDLITKLMDPDCNKRLGSNGYQEIKKHPFFRTIKWDNLNSGPGPFVPQTENVEDLTYFEKNISGSDNINKNNCQTSATLILNGIFAFHPPPKATPADSGTETSNSAAFSASEEETTNLTDQKRKDLFSLITKAFKGIDLKALNYNNKATLLRMYDEVDFPKNQQRNKEKFRIQKRPNKKYRYHLF</sequence>